<gene>
    <name evidence="1" type="primary">ilvD</name>
    <name type="ordered locus">SSU05_1892</name>
</gene>
<comment type="function">
    <text evidence="1">Functions in the biosynthesis of branched-chain amino acids. Catalyzes the dehydration of (2R,3R)-2,3-dihydroxy-3-methylpentanoate (2,3-dihydroxy-3-methylvalerate) into 2-oxo-3-methylpentanoate (2-oxo-3-methylvalerate) and of (2R)-2,3-dihydroxy-3-methylbutanoate (2,3-dihydroxyisovalerate) into 2-oxo-3-methylbutanoate (2-oxoisovalerate), the penultimate precursor to L-isoleucine and L-valine, respectively.</text>
</comment>
<comment type="catalytic activity">
    <reaction evidence="1">
        <text>(2R)-2,3-dihydroxy-3-methylbutanoate = 3-methyl-2-oxobutanoate + H2O</text>
        <dbReference type="Rhea" id="RHEA:24809"/>
        <dbReference type="ChEBI" id="CHEBI:11851"/>
        <dbReference type="ChEBI" id="CHEBI:15377"/>
        <dbReference type="ChEBI" id="CHEBI:49072"/>
        <dbReference type="EC" id="4.2.1.9"/>
    </reaction>
    <physiologicalReaction direction="left-to-right" evidence="1">
        <dbReference type="Rhea" id="RHEA:24810"/>
    </physiologicalReaction>
</comment>
<comment type="catalytic activity">
    <reaction evidence="1">
        <text>(2R,3R)-2,3-dihydroxy-3-methylpentanoate = (S)-3-methyl-2-oxopentanoate + H2O</text>
        <dbReference type="Rhea" id="RHEA:27694"/>
        <dbReference type="ChEBI" id="CHEBI:15377"/>
        <dbReference type="ChEBI" id="CHEBI:35146"/>
        <dbReference type="ChEBI" id="CHEBI:49258"/>
        <dbReference type="EC" id="4.2.1.9"/>
    </reaction>
    <physiologicalReaction direction="left-to-right" evidence="1">
        <dbReference type="Rhea" id="RHEA:27695"/>
    </physiologicalReaction>
</comment>
<comment type="cofactor">
    <cofactor evidence="1">
        <name>[2Fe-2S] cluster</name>
        <dbReference type="ChEBI" id="CHEBI:190135"/>
    </cofactor>
    <text evidence="1">Binds 1 [2Fe-2S] cluster per subunit. This cluster acts as a Lewis acid cofactor.</text>
</comment>
<comment type="cofactor">
    <cofactor evidence="1">
        <name>Mg(2+)</name>
        <dbReference type="ChEBI" id="CHEBI:18420"/>
    </cofactor>
</comment>
<comment type="pathway">
    <text evidence="1">Amino-acid biosynthesis; L-isoleucine biosynthesis; L-isoleucine from 2-oxobutanoate: step 3/4.</text>
</comment>
<comment type="pathway">
    <text evidence="1">Amino-acid biosynthesis; L-valine biosynthesis; L-valine from pyruvate: step 3/4.</text>
</comment>
<comment type="subunit">
    <text evidence="1">Homodimer.</text>
</comment>
<comment type="similarity">
    <text evidence="1">Belongs to the IlvD/Edd family.</text>
</comment>
<protein>
    <recommendedName>
        <fullName evidence="1">Dihydroxy-acid dehydratase</fullName>
        <shortName evidence="1">DAD</shortName>
        <ecNumber evidence="1">4.2.1.9</ecNumber>
    </recommendedName>
</protein>
<accession>A4VXL9</accession>
<proteinExistence type="inferred from homology"/>
<reference key="1">
    <citation type="journal article" date="2007" name="PLoS ONE">
        <title>A glimpse of streptococcal toxic shock syndrome from comparative genomics of S. suis 2 Chinese isolates.</title>
        <authorList>
            <person name="Chen C."/>
            <person name="Tang J."/>
            <person name="Dong W."/>
            <person name="Wang C."/>
            <person name="Feng Y."/>
            <person name="Wang J."/>
            <person name="Zheng F."/>
            <person name="Pan X."/>
            <person name="Liu D."/>
            <person name="Li M."/>
            <person name="Song Y."/>
            <person name="Zhu X."/>
            <person name="Sun H."/>
            <person name="Feng T."/>
            <person name="Guo Z."/>
            <person name="Ju A."/>
            <person name="Ge J."/>
            <person name="Dong Y."/>
            <person name="Sun W."/>
            <person name="Jiang Y."/>
            <person name="Wang J."/>
            <person name="Yan J."/>
            <person name="Yang H."/>
            <person name="Wang X."/>
            <person name="Gao G.F."/>
            <person name="Yang R."/>
            <person name="Wang J."/>
            <person name="Yu J."/>
        </authorList>
    </citation>
    <scope>NUCLEOTIDE SEQUENCE [LARGE SCALE GENOMIC DNA]</scope>
    <source>
        <strain>05ZYH33</strain>
    </source>
</reference>
<sequence>MTDTNKLKDFRHRSSVYDSMVKSPNRAMLRATGMTDDSFEKPIVGVISTWAENTPCNIHLHDFGKLAKEGVKEAGAWPVQYGTITVADGIAMGTPGMRFSLTSRDIIADSIEAAMGGHNVDAFVAIGGCDKNMPGSMIAIANMDIPAVFAYGGTIAPGNLNGKDIDLVSVFEGIGKWNNGDLTAEEVRQIECNACPGPGGCGGMYTANTMATAIEVMGMSIPGSSSHPAESPEKKADIEEAGRAVVRMLELGIKPSDIMTREAFEDAITVTMALGGSTNATLHLLAIAHAANVDLTLEDFNDFQERVPHLADLKPSGKYVFQDLYNVGGVPAVMKYLLKNGFLHGDRITCTGKTVAENLKNFADLTPGQDVIMPLENPKRADGPLIILKGNLAPEGAVAKVSGVKVRNHTGPAKVFDSEEEAIEAVLTDEIVDGDVVVVRYVGPKGGPGMPEMLSLSSMIVGKGQGDKVALLTDGRFSGGTYGLVVGHIAPEAQDGGPIAYLRTGDLVTVDQDTKEITMHVSDQEIEERKKTTVIPPLYSRGVLGKYAHTVSSASKGAVTDFWRPERTGKK</sequence>
<evidence type="ECO:0000255" key="1">
    <source>
        <dbReference type="HAMAP-Rule" id="MF_00012"/>
    </source>
</evidence>
<feature type="chain" id="PRO_1000001072" description="Dihydroxy-acid dehydratase">
    <location>
        <begin position="1"/>
        <end position="571"/>
    </location>
</feature>
<feature type="active site" description="Proton acceptor" evidence="1">
    <location>
        <position position="478"/>
    </location>
</feature>
<feature type="binding site" evidence="1">
    <location>
        <position position="56"/>
    </location>
    <ligand>
        <name>[2Fe-2S] cluster</name>
        <dbReference type="ChEBI" id="CHEBI:190135"/>
    </ligand>
</feature>
<feature type="binding site" evidence="1">
    <location>
        <position position="88"/>
    </location>
    <ligand>
        <name>Mg(2+)</name>
        <dbReference type="ChEBI" id="CHEBI:18420"/>
    </ligand>
</feature>
<feature type="binding site" evidence="1">
    <location>
        <position position="129"/>
    </location>
    <ligand>
        <name>[2Fe-2S] cluster</name>
        <dbReference type="ChEBI" id="CHEBI:190135"/>
    </ligand>
</feature>
<feature type="binding site" evidence="1">
    <location>
        <position position="130"/>
    </location>
    <ligand>
        <name>Mg(2+)</name>
        <dbReference type="ChEBI" id="CHEBI:18420"/>
    </ligand>
</feature>
<feature type="binding site" description="via carbamate group" evidence="1">
    <location>
        <position position="131"/>
    </location>
    <ligand>
        <name>Mg(2+)</name>
        <dbReference type="ChEBI" id="CHEBI:18420"/>
    </ligand>
</feature>
<feature type="binding site" evidence="1">
    <location>
        <position position="201"/>
    </location>
    <ligand>
        <name>[2Fe-2S] cluster</name>
        <dbReference type="ChEBI" id="CHEBI:190135"/>
    </ligand>
</feature>
<feature type="binding site" evidence="1">
    <location>
        <position position="452"/>
    </location>
    <ligand>
        <name>Mg(2+)</name>
        <dbReference type="ChEBI" id="CHEBI:18420"/>
    </ligand>
</feature>
<feature type="modified residue" description="N6-carboxylysine" evidence="1">
    <location>
        <position position="131"/>
    </location>
</feature>
<dbReference type="EC" id="4.2.1.9" evidence="1"/>
<dbReference type="EMBL" id="CP000407">
    <property type="protein sequence ID" value="ABP90858.1"/>
    <property type="molecule type" value="Genomic_DNA"/>
</dbReference>
<dbReference type="SMR" id="A4VXL9"/>
<dbReference type="STRING" id="391295.SSU05_1892"/>
<dbReference type="KEGG" id="ssu:SSU05_1892"/>
<dbReference type="eggNOG" id="COG0129">
    <property type="taxonomic scope" value="Bacteria"/>
</dbReference>
<dbReference type="HOGENOM" id="CLU_014271_4_2_9"/>
<dbReference type="UniPathway" id="UPA00047">
    <property type="reaction ID" value="UER00057"/>
</dbReference>
<dbReference type="UniPathway" id="UPA00049">
    <property type="reaction ID" value="UER00061"/>
</dbReference>
<dbReference type="GO" id="GO:0051537">
    <property type="term" value="F:2 iron, 2 sulfur cluster binding"/>
    <property type="evidence" value="ECO:0007669"/>
    <property type="project" value="UniProtKB-UniRule"/>
</dbReference>
<dbReference type="GO" id="GO:0004160">
    <property type="term" value="F:dihydroxy-acid dehydratase activity"/>
    <property type="evidence" value="ECO:0007669"/>
    <property type="project" value="UniProtKB-UniRule"/>
</dbReference>
<dbReference type="GO" id="GO:0000287">
    <property type="term" value="F:magnesium ion binding"/>
    <property type="evidence" value="ECO:0007669"/>
    <property type="project" value="UniProtKB-UniRule"/>
</dbReference>
<dbReference type="GO" id="GO:0009097">
    <property type="term" value="P:isoleucine biosynthetic process"/>
    <property type="evidence" value="ECO:0007669"/>
    <property type="project" value="UniProtKB-UniRule"/>
</dbReference>
<dbReference type="GO" id="GO:0009099">
    <property type="term" value="P:L-valine biosynthetic process"/>
    <property type="evidence" value="ECO:0007669"/>
    <property type="project" value="UniProtKB-UniRule"/>
</dbReference>
<dbReference type="FunFam" id="3.50.30.80:FF:000001">
    <property type="entry name" value="Dihydroxy-acid dehydratase"/>
    <property type="match status" value="1"/>
</dbReference>
<dbReference type="Gene3D" id="3.50.30.80">
    <property type="entry name" value="IlvD/EDD C-terminal domain-like"/>
    <property type="match status" value="1"/>
</dbReference>
<dbReference type="HAMAP" id="MF_00012">
    <property type="entry name" value="IlvD"/>
    <property type="match status" value="1"/>
</dbReference>
<dbReference type="InterPro" id="IPR050165">
    <property type="entry name" value="DHAD_IlvD/Edd"/>
</dbReference>
<dbReference type="InterPro" id="IPR042096">
    <property type="entry name" value="Dihydro-acid_dehy_C"/>
</dbReference>
<dbReference type="InterPro" id="IPR004404">
    <property type="entry name" value="DihydroxyA_deHydtase"/>
</dbReference>
<dbReference type="InterPro" id="IPR020558">
    <property type="entry name" value="DiOHA_6PGluconate_deHydtase_CS"/>
</dbReference>
<dbReference type="InterPro" id="IPR056740">
    <property type="entry name" value="ILV_EDD_C"/>
</dbReference>
<dbReference type="InterPro" id="IPR000581">
    <property type="entry name" value="ILV_EDD_N"/>
</dbReference>
<dbReference type="InterPro" id="IPR037237">
    <property type="entry name" value="IlvD/EDD_N"/>
</dbReference>
<dbReference type="NCBIfam" id="TIGR00110">
    <property type="entry name" value="ilvD"/>
    <property type="match status" value="1"/>
</dbReference>
<dbReference type="NCBIfam" id="NF002068">
    <property type="entry name" value="PRK00911.1"/>
    <property type="match status" value="1"/>
</dbReference>
<dbReference type="PANTHER" id="PTHR21000">
    <property type="entry name" value="DIHYDROXY-ACID DEHYDRATASE DAD"/>
    <property type="match status" value="1"/>
</dbReference>
<dbReference type="PANTHER" id="PTHR21000:SF5">
    <property type="entry name" value="DIHYDROXY-ACID DEHYDRATASE, MITOCHONDRIAL"/>
    <property type="match status" value="1"/>
</dbReference>
<dbReference type="Pfam" id="PF24877">
    <property type="entry name" value="ILV_EDD_C"/>
    <property type="match status" value="1"/>
</dbReference>
<dbReference type="Pfam" id="PF00920">
    <property type="entry name" value="ILVD_EDD_N"/>
    <property type="match status" value="1"/>
</dbReference>
<dbReference type="SUPFAM" id="SSF143975">
    <property type="entry name" value="IlvD/EDD N-terminal domain-like"/>
    <property type="match status" value="1"/>
</dbReference>
<dbReference type="SUPFAM" id="SSF52016">
    <property type="entry name" value="LeuD/IlvD-like"/>
    <property type="match status" value="1"/>
</dbReference>
<dbReference type="PROSITE" id="PS00886">
    <property type="entry name" value="ILVD_EDD_1"/>
    <property type="match status" value="1"/>
</dbReference>
<dbReference type="PROSITE" id="PS00887">
    <property type="entry name" value="ILVD_EDD_2"/>
    <property type="match status" value="1"/>
</dbReference>
<organism>
    <name type="scientific">Streptococcus suis (strain 05ZYH33)</name>
    <dbReference type="NCBI Taxonomy" id="391295"/>
    <lineage>
        <taxon>Bacteria</taxon>
        <taxon>Bacillati</taxon>
        <taxon>Bacillota</taxon>
        <taxon>Bacilli</taxon>
        <taxon>Lactobacillales</taxon>
        <taxon>Streptococcaceae</taxon>
        <taxon>Streptococcus</taxon>
    </lineage>
</organism>
<name>ILVD_STRSY</name>
<keyword id="KW-0001">2Fe-2S</keyword>
<keyword id="KW-0028">Amino-acid biosynthesis</keyword>
<keyword id="KW-0100">Branched-chain amino acid biosynthesis</keyword>
<keyword id="KW-0408">Iron</keyword>
<keyword id="KW-0411">Iron-sulfur</keyword>
<keyword id="KW-0456">Lyase</keyword>
<keyword id="KW-0460">Magnesium</keyword>
<keyword id="KW-0479">Metal-binding</keyword>